<dbReference type="EC" id="1.1.1.86" evidence="1"/>
<dbReference type="EMBL" id="AP007255">
    <property type="protein sequence ID" value="BAE52313.1"/>
    <property type="status" value="ALT_INIT"/>
    <property type="molecule type" value="Genomic_DNA"/>
</dbReference>
<dbReference type="RefSeq" id="WP_011385869.1">
    <property type="nucleotide sequence ID" value="NC_007626.1"/>
</dbReference>
<dbReference type="SMR" id="Q2W1G2"/>
<dbReference type="STRING" id="342108.amb3509"/>
<dbReference type="KEGG" id="mag:amb3509"/>
<dbReference type="HOGENOM" id="CLU_033821_0_1_5"/>
<dbReference type="OrthoDB" id="9804088at2"/>
<dbReference type="UniPathway" id="UPA00047">
    <property type="reaction ID" value="UER00056"/>
</dbReference>
<dbReference type="UniPathway" id="UPA00049">
    <property type="reaction ID" value="UER00060"/>
</dbReference>
<dbReference type="Proteomes" id="UP000007058">
    <property type="component" value="Chromosome"/>
</dbReference>
<dbReference type="GO" id="GO:0005829">
    <property type="term" value="C:cytosol"/>
    <property type="evidence" value="ECO:0007669"/>
    <property type="project" value="TreeGrafter"/>
</dbReference>
<dbReference type="GO" id="GO:0004455">
    <property type="term" value="F:ketol-acid reductoisomerase activity"/>
    <property type="evidence" value="ECO:0007669"/>
    <property type="project" value="UniProtKB-UniRule"/>
</dbReference>
<dbReference type="GO" id="GO:0000287">
    <property type="term" value="F:magnesium ion binding"/>
    <property type="evidence" value="ECO:0007669"/>
    <property type="project" value="UniProtKB-UniRule"/>
</dbReference>
<dbReference type="GO" id="GO:0050661">
    <property type="term" value="F:NADP binding"/>
    <property type="evidence" value="ECO:0007669"/>
    <property type="project" value="InterPro"/>
</dbReference>
<dbReference type="GO" id="GO:0009097">
    <property type="term" value="P:isoleucine biosynthetic process"/>
    <property type="evidence" value="ECO:0007669"/>
    <property type="project" value="UniProtKB-UniRule"/>
</dbReference>
<dbReference type="GO" id="GO:0009099">
    <property type="term" value="P:L-valine biosynthetic process"/>
    <property type="evidence" value="ECO:0007669"/>
    <property type="project" value="UniProtKB-UniRule"/>
</dbReference>
<dbReference type="FunFam" id="3.40.50.720:FF:000023">
    <property type="entry name" value="Ketol-acid reductoisomerase (NADP(+))"/>
    <property type="match status" value="1"/>
</dbReference>
<dbReference type="Gene3D" id="6.10.240.10">
    <property type="match status" value="1"/>
</dbReference>
<dbReference type="Gene3D" id="3.40.50.720">
    <property type="entry name" value="NAD(P)-binding Rossmann-like Domain"/>
    <property type="match status" value="1"/>
</dbReference>
<dbReference type="HAMAP" id="MF_00435">
    <property type="entry name" value="IlvC"/>
    <property type="match status" value="1"/>
</dbReference>
<dbReference type="InterPro" id="IPR008927">
    <property type="entry name" value="6-PGluconate_DH-like_C_sf"/>
</dbReference>
<dbReference type="InterPro" id="IPR013023">
    <property type="entry name" value="KARI"/>
</dbReference>
<dbReference type="InterPro" id="IPR000506">
    <property type="entry name" value="KARI_C"/>
</dbReference>
<dbReference type="InterPro" id="IPR013116">
    <property type="entry name" value="KARI_N"/>
</dbReference>
<dbReference type="InterPro" id="IPR014359">
    <property type="entry name" value="KARI_prok"/>
</dbReference>
<dbReference type="InterPro" id="IPR036291">
    <property type="entry name" value="NAD(P)-bd_dom_sf"/>
</dbReference>
<dbReference type="NCBIfam" id="TIGR00465">
    <property type="entry name" value="ilvC"/>
    <property type="match status" value="1"/>
</dbReference>
<dbReference type="NCBIfam" id="NF004017">
    <property type="entry name" value="PRK05479.1"/>
    <property type="match status" value="1"/>
</dbReference>
<dbReference type="NCBIfam" id="NF009940">
    <property type="entry name" value="PRK13403.1"/>
    <property type="match status" value="1"/>
</dbReference>
<dbReference type="PANTHER" id="PTHR21371">
    <property type="entry name" value="KETOL-ACID REDUCTOISOMERASE, MITOCHONDRIAL"/>
    <property type="match status" value="1"/>
</dbReference>
<dbReference type="PANTHER" id="PTHR21371:SF1">
    <property type="entry name" value="KETOL-ACID REDUCTOISOMERASE, MITOCHONDRIAL"/>
    <property type="match status" value="1"/>
</dbReference>
<dbReference type="Pfam" id="PF01450">
    <property type="entry name" value="KARI_C"/>
    <property type="match status" value="1"/>
</dbReference>
<dbReference type="Pfam" id="PF07991">
    <property type="entry name" value="KARI_N"/>
    <property type="match status" value="1"/>
</dbReference>
<dbReference type="PIRSF" id="PIRSF000116">
    <property type="entry name" value="IlvC_gammaproteo"/>
    <property type="match status" value="1"/>
</dbReference>
<dbReference type="SUPFAM" id="SSF48179">
    <property type="entry name" value="6-phosphogluconate dehydrogenase C-terminal domain-like"/>
    <property type="match status" value="1"/>
</dbReference>
<dbReference type="SUPFAM" id="SSF51735">
    <property type="entry name" value="NAD(P)-binding Rossmann-fold domains"/>
    <property type="match status" value="1"/>
</dbReference>
<dbReference type="PROSITE" id="PS51851">
    <property type="entry name" value="KARI_C"/>
    <property type="match status" value="1"/>
</dbReference>
<dbReference type="PROSITE" id="PS51850">
    <property type="entry name" value="KARI_N"/>
    <property type="match status" value="1"/>
</dbReference>
<sequence>MRVYYDRDADVNLIKGKKVVVVGYGSQGHAHALNLRDSGVKDVAVALRAGSATAKKAEGEGLKVMTPADAAKWGDVVMILTPDELQADLYYNDLAANMKQGASLVFAHGLNIHFKLIEARADLDVFMVAPKGPGHTVRGEYVKGGGVPCLVAVAQNASGNALEIALSYASAIGGGRSGIIETSFREECETDLFGEQVVLCGGLTKLIQYGFETLVEAGYAPEMAYFECLHEVKLIVDLIYEGGIANMRYSISNTAEYGDYVTGPRIITDETKAEMKRVLEDIQAGRFVRDWMLECKAGQPSFKATRRIQAEHGIEVVGEKLRAMMPWIAKNKLVDKAKN</sequence>
<protein>
    <recommendedName>
        <fullName evidence="1">Ketol-acid reductoisomerase (NADP(+))</fullName>
        <shortName evidence="1">KARI</shortName>
        <ecNumber evidence="1">1.1.1.86</ecNumber>
    </recommendedName>
    <alternativeName>
        <fullName evidence="1">Acetohydroxy-acid isomeroreductase</fullName>
        <shortName evidence="1">AHIR</shortName>
    </alternativeName>
    <alternativeName>
        <fullName evidence="1">Alpha-keto-beta-hydroxylacyl reductoisomerase</fullName>
    </alternativeName>
    <alternativeName>
        <fullName evidence="1">Ketol-acid reductoisomerase type 1</fullName>
    </alternativeName>
    <alternativeName>
        <fullName evidence="1">Ketol-acid reductoisomerase type I</fullName>
    </alternativeName>
</protein>
<accession>Q2W1G2</accession>
<keyword id="KW-0028">Amino-acid biosynthesis</keyword>
<keyword id="KW-0100">Branched-chain amino acid biosynthesis</keyword>
<keyword id="KW-0460">Magnesium</keyword>
<keyword id="KW-0479">Metal-binding</keyword>
<keyword id="KW-0521">NADP</keyword>
<keyword id="KW-0560">Oxidoreductase</keyword>
<comment type="function">
    <text evidence="1">Involved in the biosynthesis of branched-chain amino acids (BCAA). Catalyzes an alkyl-migration followed by a ketol-acid reduction of (S)-2-acetolactate (S2AL) to yield (R)-2,3-dihydroxy-isovalerate. In the isomerase reaction, S2AL is rearranged via a Mg-dependent methyl migration to produce 3-hydroxy-3-methyl-2-ketobutyrate (HMKB). In the reductase reaction, this 2-ketoacid undergoes a metal-dependent reduction by NADPH to yield (R)-2,3-dihydroxy-isovalerate.</text>
</comment>
<comment type="catalytic activity">
    <reaction evidence="1">
        <text>(2R)-2,3-dihydroxy-3-methylbutanoate + NADP(+) = (2S)-2-acetolactate + NADPH + H(+)</text>
        <dbReference type="Rhea" id="RHEA:22068"/>
        <dbReference type="ChEBI" id="CHEBI:15378"/>
        <dbReference type="ChEBI" id="CHEBI:49072"/>
        <dbReference type="ChEBI" id="CHEBI:57783"/>
        <dbReference type="ChEBI" id="CHEBI:58349"/>
        <dbReference type="ChEBI" id="CHEBI:58476"/>
        <dbReference type="EC" id="1.1.1.86"/>
    </reaction>
</comment>
<comment type="catalytic activity">
    <reaction evidence="1">
        <text>(2R,3R)-2,3-dihydroxy-3-methylpentanoate + NADP(+) = (S)-2-ethyl-2-hydroxy-3-oxobutanoate + NADPH + H(+)</text>
        <dbReference type="Rhea" id="RHEA:13493"/>
        <dbReference type="ChEBI" id="CHEBI:15378"/>
        <dbReference type="ChEBI" id="CHEBI:49256"/>
        <dbReference type="ChEBI" id="CHEBI:49258"/>
        <dbReference type="ChEBI" id="CHEBI:57783"/>
        <dbReference type="ChEBI" id="CHEBI:58349"/>
        <dbReference type="EC" id="1.1.1.86"/>
    </reaction>
</comment>
<comment type="cofactor">
    <cofactor evidence="1">
        <name>Mg(2+)</name>
        <dbReference type="ChEBI" id="CHEBI:18420"/>
    </cofactor>
    <text evidence="1">Binds 2 magnesium ions per subunit.</text>
</comment>
<comment type="pathway">
    <text evidence="1">Amino-acid biosynthesis; L-isoleucine biosynthesis; L-isoleucine from 2-oxobutanoate: step 2/4.</text>
</comment>
<comment type="pathway">
    <text evidence="1">Amino-acid biosynthesis; L-valine biosynthesis; L-valine from pyruvate: step 2/4.</text>
</comment>
<comment type="similarity">
    <text evidence="1">Belongs to the ketol-acid reductoisomerase family.</text>
</comment>
<comment type="sequence caution" evidence="4">
    <conflict type="erroneous initiation">
        <sequence resource="EMBL-CDS" id="BAE52313"/>
    </conflict>
</comment>
<proteinExistence type="inferred from homology"/>
<reference key="1">
    <citation type="journal article" date="2005" name="DNA Res.">
        <title>Complete genome sequence of the facultative anaerobic magnetotactic bacterium Magnetospirillum sp. strain AMB-1.</title>
        <authorList>
            <person name="Matsunaga T."/>
            <person name="Okamura Y."/>
            <person name="Fukuda Y."/>
            <person name="Wahyudi A.T."/>
            <person name="Murase Y."/>
            <person name="Takeyama H."/>
        </authorList>
    </citation>
    <scope>NUCLEOTIDE SEQUENCE [LARGE SCALE GENOMIC DNA]</scope>
    <source>
        <strain>ATCC 700264 / AMB-1</strain>
    </source>
</reference>
<feature type="chain" id="PRO_0000252765" description="Ketol-acid reductoisomerase (NADP(+))">
    <location>
        <begin position="1"/>
        <end position="339"/>
    </location>
</feature>
<feature type="domain" description="KARI N-terminal Rossmann" evidence="2">
    <location>
        <begin position="1"/>
        <end position="182"/>
    </location>
</feature>
<feature type="domain" description="KARI C-terminal knotted" evidence="3">
    <location>
        <begin position="183"/>
        <end position="328"/>
    </location>
</feature>
<feature type="active site" evidence="1">
    <location>
        <position position="108"/>
    </location>
</feature>
<feature type="binding site" evidence="1">
    <location>
        <begin position="24"/>
        <end position="27"/>
    </location>
    <ligand>
        <name>NADP(+)</name>
        <dbReference type="ChEBI" id="CHEBI:58349"/>
    </ligand>
</feature>
<feature type="binding site" evidence="1">
    <location>
        <position position="48"/>
    </location>
    <ligand>
        <name>NADP(+)</name>
        <dbReference type="ChEBI" id="CHEBI:58349"/>
    </ligand>
</feature>
<feature type="binding site" evidence="1">
    <location>
        <position position="51"/>
    </location>
    <ligand>
        <name>NADP(+)</name>
        <dbReference type="ChEBI" id="CHEBI:58349"/>
    </ligand>
</feature>
<feature type="binding site" evidence="1">
    <location>
        <position position="53"/>
    </location>
    <ligand>
        <name>NADP(+)</name>
        <dbReference type="ChEBI" id="CHEBI:58349"/>
    </ligand>
</feature>
<feature type="binding site" evidence="1">
    <location>
        <begin position="83"/>
        <end position="86"/>
    </location>
    <ligand>
        <name>NADP(+)</name>
        <dbReference type="ChEBI" id="CHEBI:58349"/>
    </ligand>
</feature>
<feature type="binding site" evidence="1">
    <location>
        <position position="134"/>
    </location>
    <ligand>
        <name>NADP(+)</name>
        <dbReference type="ChEBI" id="CHEBI:58349"/>
    </ligand>
</feature>
<feature type="binding site" evidence="1">
    <location>
        <position position="191"/>
    </location>
    <ligand>
        <name>Mg(2+)</name>
        <dbReference type="ChEBI" id="CHEBI:18420"/>
        <label>1</label>
    </ligand>
</feature>
<feature type="binding site" evidence="1">
    <location>
        <position position="191"/>
    </location>
    <ligand>
        <name>Mg(2+)</name>
        <dbReference type="ChEBI" id="CHEBI:18420"/>
        <label>2</label>
    </ligand>
</feature>
<feature type="binding site" evidence="1">
    <location>
        <position position="195"/>
    </location>
    <ligand>
        <name>Mg(2+)</name>
        <dbReference type="ChEBI" id="CHEBI:18420"/>
        <label>1</label>
    </ligand>
</feature>
<feature type="binding site" evidence="1">
    <location>
        <position position="227"/>
    </location>
    <ligand>
        <name>Mg(2+)</name>
        <dbReference type="ChEBI" id="CHEBI:18420"/>
        <label>2</label>
    </ligand>
</feature>
<feature type="binding site" evidence="1">
    <location>
        <position position="231"/>
    </location>
    <ligand>
        <name>Mg(2+)</name>
        <dbReference type="ChEBI" id="CHEBI:18420"/>
        <label>2</label>
    </ligand>
</feature>
<feature type="binding site" evidence="1">
    <location>
        <position position="252"/>
    </location>
    <ligand>
        <name>substrate</name>
    </ligand>
</feature>
<name>ILVC_PARM1</name>
<evidence type="ECO:0000255" key="1">
    <source>
        <dbReference type="HAMAP-Rule" id="MF_00435"/>
    </source>
</evidence>
<evidence type="ECO:0000255" key="2">
    <source>
        <dbReference type="PROSITE-ProRule" id="PRU01197"/>
    </source>
</evidence>
<evidence type="ECO:0000255" key="3">
    <source>
        <dbReference type="PROSITE-ProRule" id="PRU01198"/>
    </source>
</evidence>
<evidence type="ECO:0000305" key="4"/>
<gene>
    <name evidence="1" type="primary">ilvC</name>
    <name type="ordered locus">amb3509</name>
</gene>
<organism>
    <name type="scientific">Paramagnetospirillum magneticum (strain ATCC 700264 / AMB-1)</name>
    <name type="common">Magnetospirillum magneticum</name>
    <dbReference type="NCBI Taxonomy" id="342108"/>
    <lineage>
        <taxon>Bacteria</taxon>
        <taxon>Pseudomonadati</taxon>
        <taxon>Pseudomonadota</taxon>
        <taxon>Alphaproteobacteria</taxon>
        <taxon>Rhodospirillales</taxon>
        <taxon>Magnetospirillaceae</taxon>
        <taxon>Paramagnetospirillum</taxon>
    </lineage>
</organism>